<organism>
    <name type="scientific">Escherichia coli O127:H6 (strain E2348/69 / EPEC)</name>
    <dbReference type="NCBI Taxonomy" id="574521"/>
    <lineage>
        <taxon>Bacteria</taxon>
        <taxon>Pseudomonadati</taxon>
        <taxon>Pseudomonadota</taxon>
        <taxon>Gammaproteobacteria</taxon>
        <taxon>Enterobacterales</taxon>
        <taxon>Enterobacteriaceae</taxon>
        <taxon>Escherichia</taxon>
    </lineage>
</organism>
<dbReference type="EC" id="2.7.7.8" evidence="1"/>
<dbReference type="EMBL" id="FM180568">
    <property type="protein sequence ID" value="CAS10993.1"/>
    <property type="molecule type" value="Genomic_DNA"/>
</dbReference>
<dbReference type="RefSeq" id="WP_012579005.1">
    <property type="nucleotide sequence ID" value="NC_011601.1"/>
</dbReference>
<dbReference type="SMR" id="B7UJ59"/>
<dbReference type="KEGG" id="ecg:E2348C_3445"/>
<dbReference type="HOGENOM" id="CLU_004217_2_2_6"/>
<dbReference type="Proteomes" id="UP000008205">
    <property type="component" value="Chromosome"/>
</dbReference>
<dbReference type="GO" id="GO:0005829">
    <property type="term" value="C:cytosol"/>
    <property type="evidence" value="ECO:0007669"/>
    <property type="project" value="TreeGrafter"/>
</dbReference>
<dbReference type="GO" id="GO:0000175">
    <property type="term" value="F:3'-5'-RNA exonuclease activity"/>
    <property type="evidence" value="ECO:0007669"/>
    <property type="project" value="TreeGrafter"/>
</dbReference>
<dbReference type="GO" id="GO:0000287">
    <property type="term" value="F:magnesium ion binding"/>
    <property type="evidence" value="ECO:0007669"/>
    <property type="project" value="UniProtKB-UniRule"/>
</dbReference>
<dbReference type="GO" id="GO:0004654">
    <property type="term" value="F:polyribonucleotide nucleotidyltransferase activity"/>
    <property type="evidence" value="ECO:0007669"/>
    <property type="project" value="UniProtKB-UniRule"/>
</dbReference>
<dbReference type="GO" id="GO:0003723">
    <property type="term" value="F:RNA binding"/>
    <property type="evidence" value="ECO:0007669"/>
    <property type="project" value="UniProtKB-UniRule"/>
</dbReference>
<dbReference type="GO" id="GO:0006402">
    <property type="term" value="P:mRNA catabolic process"/>
    <property type="evidence" value="ECO:0007669"/>
    <property type="project" value="UniProtKB-UniRule"/>
</dbReference>
<dbReference type="GO" id="GO:0006396">
    <property type="term" value="P:RNA processing"/>
    <property type="evidence" value="ECO:0007669"/>
    <property type="project" value="InterPro"/>
</dbReference>
<dbReference type="CDD" id="cd02393">
    <property type="entry name" value="KH-I_PNPase"/>
    <property type="match status" value="1"/>
</dbReference>
<dbReference type="CDD" id="cd11363">
    <property type="entry name" value="RNase_PH_PNPase_1"/>
    <property type="match status" value="1"/>
</dbReference>
<dbReference type="CDD" id="cd11364">
    <property type="entry name" value="RNase_PH_PNPase_2"/>
    <property type="match status" value="1"/>
</dbReference>
<dbReference type="CDD" id="cd04472">
    <property type="entry name" value="S1_PNPase"/>
    <property type="match status" value="1"/>
</dbReference>
<dbReference type="FunFam" id="2.40.50.140:FF:000023">
    <property type="entry name" value="Polyribonucleotide nucleotidyltransferase"/>
    <property type="match status" value="1"/>
</dbReference>
<dbReference type="FunFam" id="3.30.1370.10:FF:000001">
    <property type="entry name" value="Polyribonucleotide nucleotidyltransferase"/>
    <property type="match status" value="1"/>
</dbReference>
<dbReference type="FunFam" id="3.30.230.70:FF:000001">
    <property type="entry name" value="Polyribonucleotide nucleotidyltransferase"/>
    <property type="match status" value="1"/>
</dbReference>
<dbReference type="FunFam" id="3.30.230.70:FF:000002">
    <property type="entry name" value="Polyribonucleotide nucleotidyltransferase"/>
    <property type="match status" value="1"/>
</dbReference>
<dbReference type="Gene3D" id="3.30.230.70">
    <property type="entry name" value="GHMP Kinase, N-terminal domain"/>
    <property type="match status" value="2"/>
</dbReference>
<dbReference type="Gene3D" id="3.30.1370.10">
    <property type="entry name" value="K Homology domain, type 1"/>
    <property type="match status" value="1"/>
</dbReference>
<dbReference type="Gene3D" id="2.40.50.140">
    <property type="entry name" value="Nucleic acid-binding proteins"/>
    <property type="match status" value="1"/>
</dbReference>
<dbReference type="HAMAP" id="MF_01595">
    <property type="entry name" value="PNPase"/>
    <property type="match status" value="1"/>
</dbReference>
<dbReference type="InterPro" id="IPR001247">
    <property type="entry name" value="ExoRNase_PH_dom1"/>
</dbReference>
<dbReference type="InterPro" id="IPR015847">
    <property type="entry name" value="ExoRNase_PH_dom2"/>
</dbReference>
<dbReference type="InterPro" id="IPR036345">
    <property type="entry name" value="ExoRNase_PH_dom2_sf"/>
</dbReference>
<dbReference type="InterPro" id="IPR004087">
    <property type="entry name" value="KH_dom"/>
</dbReference>
<dbReference type="InterPro" id="IPR004088">
    <property type="entry name" value="KH_dom_type_1"/>
</dbReference>
<dbReference type="InterPro" id="IPR036612">
    <property type="entry name" value="KH_dom_type_1_sf"/>
</dbReference>
<dbReference type="InterPro" id="IPR012340">
    <property type="entry name" value="NA-bd_OB-fold"/>
</dbReference>
<dbReference type="InterPro" id="IPR012162">
    <property type="entry name" value="PNPase"/>
</dbReference>
<dbReference type="InterPro" id="IPR027408">
    <property type="entry name" value="PNPase/RNase_PH_dom_sf"/>
</dbReference>
<dbReference type="InterPro" id="IPR015848">
    <property type="entry name" value="PNPase_PH_RNA-bd_bac/org-type"/>
</dbReference>
<dbReference type="InterPro" id="IPR036456">
    <property type="entry name" value="PNPase_PH_RNA-bd_sf"/>
</dbReference>
<dbReference type="InterPro" id="IPR020568">
    <property type="entry name" value="Ribosomal_Su5_D2-typ_SF"/>
</dbReference>
<dbReference type="InterPro" id="IPR003029">
    <property type="entry name" value="S1_domain"/>
</dbReference>
<dbReference type="NCBIfam" id="TIGR03591">
    <property type="entry name" value="polynuc_phos"/>
    <property type="match status" value="1"/>
</dbReference>
<dbReference type="NCBIfam" id="NF008805">
    <property type="entry name" value="PRK11824.1"/>
    <property type="match status" value="1"/>
</dbReference>
<dbReference type="PANTHER" id="PTHR11252">
    <property type="entry name" value="POLYRIBONUCLEOTIDE NUCLEOTIDYLTRANSFERASE"/>
    <property type="match status" value="1"/>
</dbReference>
<dbReference type="PANTHER" id="PTHR11252:SF0">
    <property type="entry name" value="POLYRIBONUCLEOTIDE NUCLEOTIDYLTRANSFERASE 1, MITOCHONDRIAL"/>
    <property type="match status" value="1"/>
</dbReference>
<dbReference type="Pfam" id="PF00013">
    <property type="entry name" value="KH_1"/>
    <property type="match status" value="1"/>
</dbReference>
<dbReference type="Pfam" id="PF03726">
    <property type="entry name" value="PNPase"/>
    <property type="match status" value="1"/>
</dbReference>
<dbReference type="Pfam" id="PF01138">
    <property type="entry name" value="RNase_PH"/>
    <property type="match status" value="2"/>
</dbReference>
<dbReference type="Pfam" id="PF03725">
    <property type="entry name" value="RNase_PH_C"/>
    <property type="match status" value="2"/>
</dbReference>
<dbReference type="Pfam" id="PF00575">
    <property type="entry name" value="S1"/>
    <property type="match status" value="1"/>
</dbReference>
<dbReference type="PIRSF" id="PIRSF005499">
    <property type="entry name" value="PNPase"/>
    <property type="match status" value="1"/>
</dbReference>
<dbReference type="SMART" id="SM00322">
    <property type="entry name" value="KH"/>
    <property type="match status" value="1"/>
</dbReference>
<dbReference type="SMART" id="SM00316">
    <property type="entry name" value="S1"/>
    <property type="match status" value="1"/>
</dbReference>
<dbReference type="SUPFAM" id="SSF54791">
    <property type="entry name" value="Eukaryotic type KH-domain (KH-domain type I)"/>
    <property type="match status" value="1"/>
</dbReference>
<dbReference type="SUPFAM" id="SSF50249">
    <property type="entry name" value="Nucleic acid-binding proteins"/>
    <property type="match status" value="1"/>
</dbReference>
<dbReference type="SUPFAM" id="SSF46915">
    <property type="entry name" value="Polynucleotide phosphorylase/guanosine pentaphosphate synthase (PNPase/GPSI), domain 3"/>
    <property type="match status" value="1"/>
</dbReference>
<dbReference type="SUPFAM" id="SSF55666">
    <property type="entry name" value="Ribonuclease PH domain 2-like"/>
    <property type="match status" value="2"/>
</dbReference>
<dbReference type="SUPFAM" id="SSF54211">
    <property type="entry name" value="Ribosomal protein S5 domain 2-like"/>
    <property type="match status" value="2"/>
</dbReference>
<dbReference type="PROSITE" id="PS50084">
    <property type="entry name" value="KH_TYPE_1"/>
    <property type="match status" value="1"/>
</dbReference>
<dbReference type="PROSITE" id="PS50126">
    <property type="entry name" value="S1"/>
    <property type="match status" value="1"/>
</dbReference>
<sequence>MLNPIVRKFQYGQHTVTLETGMMARQATAAVMVSMDDTAVFVTVVGQKKAKPGQDFFPLTVNYQERTYAAGRIPGSFFRREGRPSEGETLIARLIDRPIRPLFPEGFVNEVQVIATVVSVNPQVNPDIVAMIGASAALSLSGIPFNGPNGAARVGYINDQYVLNPTQDELKESKLDLVVAGTEAAVLMVESEAELLSEDQMLGAVVFGHEQQQVVIQNINELVKEAGKPRWDWQPEPVNEALNARVAALAEARLSDAYRITDKQERYAQVDVIKSETIATLLAEDETLDENELGEILHAIEKNVVRSRVLAGEPRIDGREKDMIRGLDVRTGVLPRTHGSALFTRGETQALVTATLGTARDAQVLDELMGERTDTFLFHYNFPPYSVGETGMVGSPKRREIGHGRLAKRGVLAVMPDMDKFPYTVRVVSEITESNGSSSMASVCGASLALMDAGVPIKAAVAGIAMGLVKEGDNYVVLSDILGDEDHLGDMDFKVAGSRDGISALQMDIKIEGITKEIMQVALNQAKGARLHILGVMEQAINAPRGDISEFAPRIHTIKINPDKIKDVIGKGGSVIRALTEETGTTIEIEDDGTVKIAATDGEKAKHAIRRIEEITAEIEVGRVYNGKVTRIVDFGAFVAIGGGKEGLVHISQIADKRVEKVTDYLQMGQEVPVKVLEVDRQGRIRLSIKEATEQSQPAAALEAPAAEQGE</sequence>
<reference key="1">
    <citation type="journal article" date="2009" name="J. Bacteriol.">
        <title>Complete genome sequence and comparative genome analysis of enteropathogenic Escherichia coli O127:H6 strain E2348/69.</title>
        <authorList>
            <person name="Iguchi A."/>
            <person name="Thomson N.R."/>
            <person name="Ogura Y."/>
            <person name="Saunders D."/>
            <person name="Ooka T."/>
            <person name="Henderson I.R."/>
            <person name="Harris D."/>
            <person name="Asadulghani M."/>
            <person name="Kurokawa K."/>
            <person name="Dean P."/>
            <person name="Kenny B."/>
            <person name="Quail M.A."/>
            <person name="Thurston S."/>
            <person name="Dougan G."/>
            <person name="Hayashi T."/>
            <person name="Parkhill J."/>
            <person name="Frankel G."/>
        </authorList>
    </citation>
    <scope>NUCLEOTIDE SEQUENCE [LARGE SCALE GENOMIC DNA]</scope>
    <source>
        <strain>E2348/69 / EPEC</strain>
    </source>
</reference>
<keyword id="KW-0963">Cytoplasm</keyword>
<keyword id="KW-0460">Magnesium</keyword>
<keyword id="KW-0479">Metal-binding</keyword>
<keyword id="KW-0548">Nucleotidyltransferase</keyword>
<keyword id="KW-1185">Reference proteome</keyword>
<keyword id="KW-0694">RNA-binding</keyword>
<keyword id="KW-0808">Transferase</keyword>
<gene>
    <name evidence="1" type="primary">pnp</name>
    <name type="ordered locus">E2348C_3445</name>
</gene>
<comment type="function">
    <text evidence="1">Involved in mRNA degradation. Catalyzes the phosphorolysis of single-stranded polyribonucleotides processively in the 3'- to 5'-direction.</text>
</comment>
<comment type="catalytic activity">
    <reaction evidence="1">
        <text>RNA(n+1) + phosphate = RNA(n) + a ribonucleoside 5'-diphosphate</text>
        <dbReference type="Rhea" id="RHEA:22096"/>
        <dbReference type="Rhea" id="RHEA-COMP:14527"/>
        <dbReference type="Rhea" id="RHEA-COMP:17342"/>
        <dbReference type="ChEBI" id="CHEBI:43474"/>
        <dbReference type="ChEBI" id="CHEBI:57930"/>
        <dbReference type="ChEBI" id="CHEBI:140395"/>
        <dbReference type="EC" id="2.7.7.8"/>
    </reaction>
</comment>
<comment type="cofactor">
    <cofactor evidence="1">
        <name>Mg(2+)</name>
        <dbReference type="ChEBI" id="CHEBI:18420"/>
    </cofactor>
</comment>
<comment type="subunit">
    <text evidence="1">Component of the RNA degradosome, which is a multiprotein complex involved in RNA processing and mRNA degradation.</text>
</comment>
<comment type="subcellular location">
    <subcellularLocation>
        <location evidence="1">Cytoplasm</location>
    </subcellularLocation>
</comment>
<comment type="similarity">
    <text evidence="1">Belongs to the polyribonucleotide nucleotidyltransferase family.</text>
</comment>
<accession>B7UJ59</accession>
<proteinExistence type="inferred from homology"/>
<name>PNP_ECO27</name>
<evidence type="ECO:0000255" key="1">
    <source>
        <dbReference type="HAMAP-Rule" id="MF_01595"/>
    </source>
</evidence>
<evidence type="ECO:0000256" key="2">
    <source>
        <dbReference type="SAM" id="MobiDB-lite"/>
    </source>
</evidence>
<feature type="chain" id="PRO_1000185737" description="Polyribonucleotide nucleotidyltransferase">
    <location>
        <begin position="1"/>
        <end position="711"/>
    </location>
</feature>
<feature type="domain" description="KH" evidence="1">
    <location>
        <begin position="553"/>
        <end position="612"/>
    </location>
</feature>
<feature type="domain" description="S1 motif" evidence="1">
    <location>
        <begin position="622"/>
        <end position="690"/>
    </location>
</feature>
<feature type="region of interest" description="Disordered" evidence="2">
    <location>
        <begin position="690"/>
        <end position="711"/>
    </location>
</feature>
<feature type="compositionally biased region" description="Low complexity" evidence="2">
    <location>
        <begin position="698"/>
        <end position="711"/>
    </location>
</feature>
<feature type="binding site" evidence="1">
    <location>
        <position position="486"/>
    </location>
    <ligand>
        <name>Mg(2+)</name>
        <dbReference type="ChEBI" id="CHEBI:18420"/>
    </ligand>
</feature>
<feature type="binding site" evidence="1">
    <location>
        <position position="492"/>
    </location>
    <ligand>
        <name>Mg(2+)</name>
        <dbReference type="ChEBI" id="CHEBI:18420"/>
    </ligand>
</feature>
<protein>
    <recommendedName>
        <fullName evidence="1">Polyribonucleotide nucleotidyltransferase</fullName>
        <ecNumber evidence="1">2.7.7.8</ecNumber>
    </recommendedName>
    <alternativeName>
        <fullName evidence="1">Polynucleotide phosphorylase</fullName>
        <shortName evidence="1">PNPase</shortName>
    </alternativeName>
</protein>